<accession>Q12W27</accession>
<keyword id="KW-0963">Cytoplasm</keyword>
<keyword id="KW-0240">DNA-directed RNA polymerase</keyword>
<keyword id="KW-0548">Nucleotidyltransferase</keyword>
<keyword id="KW-0804">Transcription</keyword>
<keyword id="KW-0808">Transferase</keyword>
<dbReference type="EC" id="2.7.7.6" evidence="1"/>
<dbReference type="EMBL" id="CP000300">
    <property type="protein sequence ID" value="ABE52349.1"/>
    <property type="molecule type" value="Genomic_DNA"/>
</dbReference>
<dbReference type="RefSeq" id="WP_011499494.1">
    <property type="nucleotide sequence ID" value="NC_007955.1"/>
</dbReference>
<dbReference type="SMR" id="Q12W27"/>
<dbReference type="STRING" id="259564.Mbur_1439"/>
<dbReference type="GeneID" id="3998467"/>
<dbReference type="KEGG" id="mbu:Mbur_1439"/>
<dbReference type="HOGENOM" id="CLU_090381_5_0_2"/>
<dbReference type="OrthoDB" id="24205at2157"/>
<dbReference type="Proteomes" id="UP000001979">
    <property type="component" value="Chromosome"/>
</dbReference>
<dbReference type="GO" id="GO:0005737">
    <property type="term" value="C:cytoplasm"/>
    <property type="evidence" value="ECO:0007669"/>
    <property type="project" value="UniProtKB-SubCell"/>
</dbReference>
<dbReference type="GO" id="GO:0000428">
    <property type="term" value="C:DNA-directed RNA polymerase complex"/>
    <property type="evidence" value="ECO:0007669"/>
    <property type="project" value="UniProtKB-KW"/>
</dbReference>
<dbReference type="GO" id="GO:0003677">
    <property type="term" value="F:DNA binding"/>
    <property type="evidence" value="ECO:0007669"/>
    <property type="project" value="InterPro"/>
</dbReference>
<dbReference type="GO" id="GO:0003899">
    <property type="term" value="F:DNA-directed RNA polymerase activity"/>
    <property type="evidence" value="ECO:0007669"/>
    <property type="project" value="UniProtKB-UniRule"/>
</dbReference>
<dbReference type="GO" id="GO:0046983">
    <property type="term" value="F:protein dimerization activity"/>
    <property type="evidence" value="ECO:0007669"/>
    <property type="project" value="InterPro"/>
</dbReference>
<dbReference type="GO" id="GO:0006351">
    <property type="term" value="P:DNA-templated transcription"/>
    <property type="evidence" value="ECO:0007669"/>
    <property type="project" value="UniProtKB-UniRule"/>
</dbReference>
<dbReference type="CDD" id="cd06927">
    <property type="entry name" value="RNAP_L"/>
    <property type="match status" value="1"/>
</dbReference>
<dbReference type="Gene3D" id="3.30.1360.10">
    <property type="entry name" value="RNA polymerase, RBP11-like subunit"/>
    <property type="match status" value="1"/>
</dbReference>
<dbReference type="HAMAP" id="MF_00261">
    <property type="entry name" value="RNApol_arch_Rpo11"/>
    <property type="match status" value="1"/>
</dbReference>
<dbReference type="InterPro" id="IPR036603">
    <property type="entry name" value="RBP11-like"/>
</dbReference>
<dbReference type="InterPro" id="IPR009025">
    <property type="entry name" value="RBP11-like_dimer"/>
</dbReference>
<dbReference type="InterPro" id="IPR008193">
    <property type="entry name" value="RNA_pol_Rpb11_13-16kDa_CS"/>
</dbReference>
<dbReference type="InterPro" id="IPR022905">
    <property type="entry name" value="Rpo11-like"/>
</dbReference>
<dbReference type="NCBIfam" id="NF002237">
    <property type="entry name" value="PRK01146.2-1"/>
    <property type="match status" value="1"/>
</dbReference>
<dbReference type="PANTHER" id="PTHR13946">
    <property type="entry name" value="DNA-DIRECTED RNA POLYMERASE I,II,III"/>
    <property type="match status" value="1"/>
</dbReference>
<dbReference type="PANTHER" id="PTHR13946:SF28">
    <property type="entry name" value="DNA-DIRECTED RNA POLYMERASES I AND III SUBUNIT RPAC2"/>
    <property type="match status" value="1"/>
</dbReference>
<dbReference type="Pfam" id="PF13656">
    <property type="entry name" value="RNA_pol_L_2"/>
    <property type="match status" value="1"/>
</dbReference>
<dbReference type="SUPFAM" id="SSF55257">
    <property type="entry name" value="RBP11-like subunits of RNA polymerase"/>
    <property type="match status" value="1"/>
</dbReference>
<dbReference type="PROSITE" id="PS01154">
    <property type="entry name" value="RNA_POL_L_13KD"/>
    <property type="match status" value="1"/>
</dbReference>
<feature type="chain" id="PRO_1000005781" description="DNA-directed RNA polymerase subunit Rpo11">
    <location>
        <begin position="1"/>
        <end position="91"/>
    </location>
</feature>
<organism>
    <name type="scientific">Methanococcoides burtonii (strain DSM 6242 / NBRC 107633 / OCM 468 / ACE-M)</name>
    <dbReference type="NCBI Taxonomy" id="259564"/>
    <lineage>
        <taxon>Archaea</taxon>
        <taxon>Methanobacteriati</taxon>
        <taxon>Methanobacteriota</taxon>
        <taxon>Stenosarchaea group</taxon>
        <taxon>Methanomicrobia</taxon>
        <taxon>Methanosarcinales</taxon>
        <taxon>Methanosarcinaceae</taxon>
        <taxon>Methanococcoides</taxon>
    </lineage>
</organism>
<protein>
    <recommendedName>
        <fullName evidence="1">DNA-directed RNA polymerase subunit Rpo11</fullName>
        <ecNumber evidence="1">2.7.7.6</ecNumber>
    </recommendedName>
    <alternativeName>
        <fullName evidence="1">DNA-directed RNA polymerase subunit L</fullName>
    </alternativeName>
</protein>
<sequence>MELKILEKSDDEMKMEIAGESHTLLNMLKIILLEDERVHTASYDMKHVTISEPVLFIKTENADPIDVVKAAVAKLITECEEFVTVFNKAVE</sequence>
<comment type="function">
    <text evidence="1">DNA-dependent RNA polymerase (RNAP) catalyzes the transcription of DNA into RNA using the four ribonucleoside triphosphates as substrates.</text>
</comment>
<comment type="catalytic activity">
    <reaction evidence="1">
        <text>RNA(n) + a ribonucleoside 5'-triphosphate = RNA(n+1) + diphosphate</text>
        <dbReference type="Rhea" id="RHEA:21248"/>
        <dbReference type="Rhea" id="RHEA-COMP:14527"/>
        <dbReference type="Rhea" id="RHEA-COMP:17342"/>
        <dbReference type="ChEBI" id="CHEBI:33019"/>
        <dbReference type="ChEBI" id="CHEBI:61557"/>
        <dbReference type="ChEBI" id="CHEBI:140395"/>
        <dbReference type="EC" id="2.7.7.6"/>
    </reaction>
</comment>
<comment type="subunit">
    <text evidence="1">Part of the RNA polymerase complex.</text>
</comment>
<comment type="subcellular location">
    <subcellularLocation>
        <location evidence="1">Cytoplasm</location>
    </subcellularLocation>
</comment>
<comment type="similarity">
    <text evidence="1">Belongs to the archaeal Rpo11/eukaryotic RPB11/RPC19 RNA polymerase subunit family.</text>
</comment>
<reference key="1">
    <citation type="journal article" date="2009" name="ISME J.">
        <title>The genome sequence of the psychrophilic archaeon, Methanococcoides burtonii: the role of genome evolution in cold adaptation.</title>
        <authorList>
            <person name="Allen M.A."/>
            <person name="Lauro F.M."/>
            <person name="Williams T.J."/>
            <person name="Burg D."/>
            <person name="Siddiqui K.S."/>
            <person name="De Francisci D."/>
            <person name="Chong K.W."/>
            <person name="Pilak O."/>
            <person name="Chew H.H."/>
            <person name="De Maere M.Z."/>
            <person name="Ting L."/>
            <person name="Katrib M."/>
            <person name="Ng C."/>
            <person name="Sowers K.R."/>
            <person name="Galperin M.Y."/>
            <person name="Anderson I.J."/>
            <person name="Ivanova N."/>
            <person name="Dalin E."/>
            <person name="Martinez M."/>
            <person name="Lapidus A."/>
            <person name="Hauser L."/>
            <person name="Land M."/>
            <person name="Thomas T."/>
            <person name="Cavicchioli R."/>
        </authorList>
    </citation>
    <scope>NUCLEOTIDE SEQUENCE [LARGE SCALE GENOMIC DNA]</scope>
    <source>
        <strain>DSM 6242 / NBRC 107633 / OCM 468 / ACE-M</strain>
    </source>
</reference>
<name>RPO11_METBU</name>
<proteinExistence type="inferred from homology"/>
<gene>
    <name evidence="1" type="primary">rpo11</name>
    <name evidence="1" type="synonym">rpoL</name>
    <name type="ordered locus">Mbur_1439</name>
</gene>
<evidence type="ECO:0000255" key="1">
    <source>
        <dbReference type="HAMAP-Rule" id="MF_00261"/>
    </source>
</evidence>